<accession>Q4VC12</accession>
<accession>A6NGH6</accession>
<accession>Q2VP95</accession>
<accession>Q5F2H5</accession>
<accession>Q7Z3M9</accession>
<accession>Q8N8G0</accession>
<feature type="chain" id="PRO_0000289109" description="Putative protein MSS51 homolog, mitochondrial">
    <location>
        <begin position="1"/>
        <end position="460"/>
    </location>
</feature>
<feature type="zinc finger region" description="MYND-type" evidence="1">
    <location>
        <begin position="105"/>
        <end position="149"/>
    </location>
</feature>
<feature type="binding site" evidence="1">
    <location>
        <position position="105"/>
    </location>
    <ligand>
        <name>Zn(2+)</name>
        <dbReference type="ChEBI" id="CHEBI:29105"/>
        <label>1</label>
    </ligand>
</feature>
<feature type="binding site" evidence="1">
    <location>
        <position position="108"/>
    </location>
    <ligand>
        <name>Zn(2+)</name>
        <dbReference type="ChEBI" id="CHEBI:29105"/>
        <label>1</label>
    </ligand>
</feature>
<feature type="binding site" evidence="1">
    <location>
        <position position="124"/>
    </location>
    <ligand>
        <name>Zn(2+)</name>
        <dbReference type="ChEBI" id="CHEBI:29105"/>
        <label>2</label>
    </ligand>
</feature>
<feature type="binding site" evidence="1">
    <location>
        <position position="127"/>
    </location>
    <ligand>
        <name>Zn(2+)</name>
        <dbReference type="ChEBI" id="CHEBI:29105"/>
        <label>2</label>
    </ligand>
</feature>
<feature type="binding site" evidence="1">
    <location>
        <position position="133"/>
    </location>
    <ligand>
        <name>Zn(2+)</name>
        <dbReference type="ChEBI" id="CHEBI:29105"/>
        <label>1</label>
    </ligand>
</feature>
<feature type="binding site" evidence="1">
    <location>
        <position position="137"/>
    </location>
    <ligand>
        <name>Zn(2+)</name>
        <dbReference type="ChEBI" id="CHEBI:29105"/>
        <label>1</label>
    </ligand>
</feature>
<feature type="binding site" evidence="1">
    <location>
        <position position="145"/>
    </location>
    <ligand>
        <name>Zn(2+)</name>
        <dbReference type="ChEBI" id="CHEBI:29105"/>
        <label>2</label>
    </ligand>
</feature>
<feature type="binding site" evidence="1">
    <location>
        <position position="149"/>
    </location>
    <ligand>
        <name>Zn(2+)</name>
        <dbReference type="ChEBI" id="CHEBI:29105"/>
        <label>2</label>
    </ligand>
</feature>
<feature type="splice variant" id="VSP_025898" description="In isoform 2 and isoform 3." evidence="2 3">
    <location>
        <begin position="1"/>
        <end position="221"/>
    </location>
</feature>
<feature type="splice variant" id="VSP_025899" description="In isoform 2 and isoform 3." evidence="2 3">
    <original>RPDPDVLQGSLKRLLTDVLSRPLTLGLGLRALGIDVRRTGGSTVHVVGASHVETFLTRPGDYDELGYMFPGHLGLRVVMVGVDVATGF</original>
    <variation>MGVPPYQALDFDVLKKCSRGWKTHFDSVLTVEHSLVGFQTPRFSGTVRGAEMSITVVQSARSQTGPHTGGFVKSFVLWLWTVSWNGFW</variation>
    <location>
        <begin position="222"/>
        <end position="309"/>
    </location>
</feature>
<feature type="splice variant" id="VSP_025900" description="In isoform 3." evidence="3">
    <original>SQSTSTS</original>
    <variation>SQVEWWC</variation>
    <location>
        <begin position="310"/>
        <end position="316"/>
    </location>
</feature>
<feature type="splice variant" id="VSP_025901" description="In isoform 3." evidence="3">
    <location>
        <begin position="317"/>
        <end position="460"/>
    </location>
</feature>
<feature type="sequence variant" id="VAR_052993" description="In dbSNP:rs11591720.">
    <original>L</original>
    <variation>P</variation>
    <location>
        <position position="417"/>
    </location>
</feature>
<feature type="sequence conflict" description="In Ref. 4; AAH94693." evidence="4" ref="4">
    <original>F</original>
    <variation>V</variation>
    <location>
        <position position="409"/>
    </location>
</feature>
<sequence length="460" mass="51289">MAPRSRRRRHKKPPSSVAPIIMAPTTIVTPVPLTPSKPGPSIDTLGFFSLDDNVPGLSQLILQKLNMKSYEEYKLVVDGGTPVSGFGFRCPQEMFQRMEDTFRFCAHCRALPSGLSDSKVLRHCKRCRNVYYCGPECQKSDWPAHRRVCQELRLVAVDRLMEWLLVTGDFVLPSGPWPWPPEAVQDWDSWFSMKGLHLDATLDAVLVSHAVTTLWASVGRPRPDPDVLQGSLKRLLTDVLSRPLTLGLGLRALGIDVRRTGGSTVHVVGASHVETFLTRPGDYDELGYMFPGHLGLRVVMVGVDVATGFSQSTSTSPLEPGTIQLSAHRGLYHDFWEEQVETGQTHHPDLVAAFHPGFHSSPDLMEAWLPTLLLLRDYKIPTLITVYSHQELVSSLQILVELDTHITAFGSNPFMSLKPEQVYSSPNKQPVYCSAYYIMFLGSSCQLDNRQLEEKVDGGI</sequence>
<comment type="interaction">
    <interactant intactId="EBI-11599933">
        <id>Q4VC12</id>
    </interactant>
    <interactant intactId="EBI-745073">
        <id>Q9BXY8</id>
        <label>BEX2</label>
    </interactant>
    <organismsDiffer>false</organismsDiffer>
    <experiments>3</experiments>
</comment>
<comment type="interaction">
    <interactant intactId="EBI-11599933">
        <id>Q4VC12</id>
    </interactant>
    <interactant intactId="EBI-745859">
        <id>P55273</id>
        <label>CDKN2D</label>
    </interactant>
    <organismsDiffer>false</organismsDiffer>
    <experiments>3</experiments>
</comment>
<comment type="interaction">
    <interactant intactId="EBI-11599933">
        <id>Q4VC12</id>
    </interactant>
    <interactant intactId="EBI-4314501">
        <id>P40199</id>
        <label>CEACAM6</label>
    </interactant>
    <organismsDiffer>false</organismsDiffer>
    <experiments>5</experiments>
</comment>
<comment type="interaction">
    <interactant intactId="EBI-11599933">
        <id>Q4VC12</id>
    </interactant>
    <interactant intactId="EBI-747082">
        <id>Q9NSA3</id>
        <label>CTNNBIP1</label>
    </interactant>
    <organismsDiffer>false</organismsDiffer>
    <experiments>3</experiments>
</comment>
<comment type="interaction">
    <interactant intactId="EBI-11599933">
        <id>Q4VC12</id>
    </interactant>
    <interactant intactId="EBI-11514233">
        <id>P59910</id>
        <label>DNAJB13</label>
    </interactant>
    <organismsDiffer>false</organismsDiffer>
    <experiments>3</experiments>
</comment>
<comment type="interaction">
    <interactant intactId="EBI-11599933">
        <id>Q4VC12</id>
    </interactant>
    <interactant intactId="EBI-740376">
        <id>Q86UW9</id>
        <label>DTX2</label>
    </interactant>
    <organismsDiffer>false</organismsDiffer>
    <experiments>3</experiments>
</comment>
<comment type="interaction">
    <interactant intactId="EBI-11599933">
        <id>Q4VC12</id>
    </interactant>
    <interactant intactId="EBI-6658203">
        <id>Q86YD7</id>
        <label>FAM90A1</label>
    </interactant>
    <organismsDiffer>false</organismsDiffer>
    <experiments>3</experiments>
</comment>
<comment type="interaction">
    <interactant intactId="EBI-11599933">
        <id>Q4VC12</id>
    </interactant>
    <interactant intactId="EBI-744104">
        <id>P55040</id>
        <label>GEM</label>
    </interactant>
    <organismsDiffer>false</organismsDiffer>
    <experiments>3</experiments>
</comment>
<comment type="interaction">
    <interactant intactId="EBI-11599933">
        <id>Q4VC12</id>
    </interactant>
    <interactant intactId="EBI-748420">
        <id>Q9NSC5</id>
        <label>HOMER3</label>
    </interactant>
    <organismsDiffer>false</organismsDiffer>
    <experiments>3</experiments>
</comment>
<comment type="interaction">
    <interactant intactId="EBI-11599933">
        <id>Q4VC12</id>
    </interactant>
    <interactant intactId="EBI-2556193">
        <id>Q63ZY3</id>
        <label>KANK2</label>
    </interactant>
    <organismsDiffer>false</organismsDiffer>
    <experiments>3</experiments>
</comment>
<comment type="interaction">
    <interactant intactId="EBI-11599933">
        <id>Q4VC12</id>
    </interactant>
    <interactant intactId="EBI-8639312">
        <id>P25800</id>
        <label>LMO1</label>
    </interactant>
    <organismsDiffer>false</organismsDiffer>
    <experiments>3</experiments>
</comment>
<comment type="interaction">
    <interactant intactId="EBI-11599933">
        <id>Q4VC12</id>
    </interactant>
    <interactant intactId="EBI-14086479">
        <id>Q8IVT4</id>
        <label>MGC50722</label>
    </interactant>
    <organismsDiffer>false</organismsDiffer>
    <experiments>3</experiments>
</comment>
<comment type="interaction">
    <interactant intactId="EBI-11599933">
        <id>Q4VC12</id>
    </interactant>
    <interactant intactId="EBI-79165">
        <id>Q9NRD5</id>
        <label>PICK1</label>
    </interactant>
    <organismsDiffer>false</organismsDiffer>
    <experiments>3</experiments>
</comment>
<comment type="interaction">
    <interactant intactId="EBI-11599933">
        <id>Q4VC12</id>
    </interactant>
    <interactant intactId="EBI-11986293">
        <id>P0CG20</id>
        <label>PRR35</label>
    </interactant>
    <organismsDiffer>false</organismsDiffer>
    <experiments>3</experiments>
</comment>
<comment type="interaction">
    <interactant intactId="EBI-11599933">
        <id>Q4VC12</id>
    </interactant>
    <interactant intactId="EBI-748391">
        <id>Q9BWG6</id>
        <label>SCNM1</label>
    </interactant>
    <organismsDiffer>false</organismsDiffer>
    <experiments>3</experiments>
</comment>
<comment type="interaction">
    <interactant intactId="EBI-11599933">
        <id>Q4VC12</id>
    </interactant>
    <interactant intactId="EBI-298027">
        <id>Q2TAY7</id>
        <label>SMU1</label>
    </interactant>
    <organismsDiffer>false</organismsDiffer>
    <experiments>3</experiments>
</comment>
<comment type="interaction">
    <interactant intactId="EBI-11599933">
        <id>Q4VC12</id>
    </interactant>
    <interactant intactId="EBI-298169">
        <id>Q96RF0</id>
        <label>SNX18</label>
    </interactant>
    <organismsDiffer>false</organismsDiffer>
    <experiments>3</experiments>
</comment>
<comment type="interaction">
    <interactant intactId="EBI-11599933">
        <id>Q4VC12</id>
    </interactant>
    <interactant intactId="EBI-357061">
        <id>Q92734</id>
        <label>TFG</label>
    </interactant>
    <organismsDiffer>false</organismsDiffer>
    <experiments>3</experiments>
</comment>
<comment type="interaction">
    <interactant intactId="EBI-11599933">
        <id>Q4VC12</id>
    </interactant>
    <interactant intactId="EBI-11741437">
        <id>Q08117-2</id>
        <label>TLE5</label>
    </interactant>
    <organismsDiffer>false</organismsDiffer>
    <experiments>3</experiments>
</comment>
<comment type="interaction">
    <interactant intactId="EBI-11599933">
        <id>Q4VC12</id>
    </interactant>
    <interactant intactId="EBI-74615">
        <id>Q9H0E2</id>
        <label>TOLLIP</label>
    </interactant>
    <organismsDiffer>false</organismsDiffer>
    <experiments>3</experiments>
</comment>
<comment type="interaction">
    <interactant intactId="EBI-11599933">
        <id>Q4VC12</id>
    </interactant>
    <interactant intactId="EBI-10241197">
        <id>Q3SY00</id>
        <label>TSGA10IP</label>
    </interactant>
    <organismsDiffer>false</organismsDiffer>
    <experiments>3</experiments>
</comment>
<comment type="alternative products">
    <event type="alternative splicing"/>
    <isoform>
        <id>Q4VC12-1</id>
        <name>1</name>
        <sequence type="displayed"/>
    </isoform>
    <isoform>
        <id>Q4VC12-2</id>
        <name>2</name>
        <sequence type="described" ref="VSP_025898 VSP_025899"/>
    </isoform>
    <isoform>
        <id>Q4VC12-3</id>
        <name>3</name>
        <sequence type="described" ref="VSP_025898 VSP_025899 VSP_025900 VSP_025901"/>
    </isoform>
</comment>
<comment type="caution">
    <text evidence="4">Although no clear MSS51 ortholog is encoded in mammalian genomes, the mammalian MSS51/ZMYND17 protein is significantly similar. Considered by a number of resources to be the ortholog of yeast MSS51.</text>
</comment>
<keyword id="KW-0025">Alternative splicing</keyword>
<keyword id="KW-0479">Metal-binding</keyword>
<keyword id="KW-1185">Reference proteome</keyword>
<keyword id="KW-0862">Zinc</keyword>
<keyword id="KW-0863">Zinc-finger</keyword>
<dbReference type="EMBL" id="AK096884">
    <property type="protein sequence ID" value="BAC04883.1"/>
    <property type="molecule type" value="mRNA"/>
</dbReference>
<dbReference type="EMBL" id="BX537678">
    <property type="protein sequence ID" value="CAD97808.1"/>
    <property type="molecule type" value="mRNA"/>
</dbReference>
<dbReference type="EMBL" id="AL353731">
    <property type="status" value="NOT_ANNOTATED_CDS"/>
    <property type="molecule type" value="Genomic_DNA"/>
</dbReference>
<dbReference type="EMBL" id="BC094693">
    <property type="protein sequence ID" value="AAH94693.1"/>
    <property type="molecule type" value="mRNA"/>
</dbReference>
<dbReference type="EMBL" id="BC109255">
    <property type="protein sequence ID" value="AAI09256.1"/>
    <property type="molecule type" value="mRNA"/>
</dbReference>
<dbReference type="EMBL" id="BC109256">
    <property type="protein sequence ID" value="AAI09257.1"/>
    <property type="molecule type" value="mRNA"/>
</dbReference>
<dbReference type="CCDS" id="CCDS31221.1">
    <molecule id="Q4VC12-1"/>
</dbReference>
<dbReference type="RefSeq" id="NP_001019764.1">
    <molecule id="Q4VC12-1"/>
    <property type="nucleotide sequence ID" value="NM_001024593.2"/>
</dbReference>
<dbReference type="RefSeq" id="XP_047280506.1">
    <molecule id="Q4VC12-1"/>
    <property type="nucleotide sequence ID" value="XM_047424550.1"/>
</dbReference>
<dbReference type="BioGRID" id="125613">
    <property type="interactions" value="25"/>
</dbReference>
<dbReference type="FunCoup" id="Q4VC12">
    <property type="interactions" value="10"/>
</dbReference>
<dbReference type="IntAct" id="Q4VC12">
    <property type="interactions" value="24"/>
</dbReference>
<dbReference type="STRING" id="9606.ENSP00000299432"/>
<dbReference type="BioMuta" id="MSS51"/>
<dbReference type="DMDM" id="152143027"/>
<dbReference type="MassIVE" id="Q4VC12"/>
<dbReference type="PaxDb" id="9606-ENSP00000299432"/>
<dbReference type="PeptideAtlas" id="Q4VC12"/>
<dbReference type="Antibodypedia" id="29415">
    <property type="antibodies" value="92 antibodies from 17 providers"/>
</dbReference>
<dbReference type="DNASU" id="118490"/>
<dbReference type="Ensembl" id="ENST00000299432.7">
    <molecule id="Q4VC12-1"/>
    <property type="protein sequence ID" value="ENSP00000299432.2"/>
    <property type="gene ID" value="ENSG00000166343.10"/>
</dbReference>
<dbReference type="Ensembl" id="ENST00000372912.1">
    <molecule id="Q4VC12-1"/>
    <property type="protein sequence ID" value="ENSP00000362003.1"/>
    <property type="gene ID" value="ENSG00000166343.10"/>
</dbReference>
<dbReference type="GeneID" id="118490"/>
<dbReference type="KEGG" id="hsa:118490"/>
<dbReference type="MANE-Select" id="ENST00000299432.7">
    <property type="protein sequence ID" value="ENSP00000299432.2"/>
    <property type="RefSeq nucleotide sequence ID" value="NM_001024593.2"/>
    <property type="RefSeq protein sequence ID" value="NP_001019764.1"/>
</dbReference>
<dbReference type="UCSC" id="uc001jud.4">
    <molecule id="Q4VC12-1"/>
    <property type="organism name" value="human"/>
</dbReference>
<dbReference type="AGR" id="HGNC:21000"/>
<dbReference type="CTD" id="118490"/>
<dbReference type="DisGeNET" id="118490"/>
<dbReference type="GeneCards" id="MSS51"/>
<dbReference type="HGNC" id="HGNC:21000">
    <property type="gene designation" value="MSS51"/>
</dbReference>
<dbReference type="HPA" id="ENSG00000166343">
    <property type="expression patterns" value="Tissue enriched (skeletal)"/>
</dbReference>
<dbReference type="MIM" id="614773">
    <property type="type" value="gene"/>
</dbReference>
<dbReference type="neXtProt" id="NX_Q4VC12"/>
<dbReference type="OpenTargets" id="ENSG00000166343"/>
<dbReference type="PharmGKB" id="PA134886837"/>
<dbReference type="VEuPathDB" id="HostDB:ENSG00000166343"/>
<dbReference type="eggNOG" id="ENOG502QVEJ">
    <property type="taxonomic scope" value="Eukaryota"/>
</dbReference>
<dbReference type="GeneTree" id="ENSGT00940000153820"/>
<dbReference type="HOGENOM" id="CLU_047718_0_0_1"/>
<dbReference type="InParanoid" id="Q4VC12"/>
<dbReference type="OMA" id="DELGHMF"/>
<dbReference type="OrthoDB" id="5282002at2759"/>
<dbReference type="PAN-GO" id="Q4VC12">
    <property type="GO annotations" value="0 GO annotations based on evolutionary models"/>
</dbReference>
<dbReference type="PhylomeDB" id="Q4VC12"/>
<dbReference type="TreeFam" id="TF330829"/>
<dbReference type="PathwayCommons" id="Q4VC12"/>
<dbReference type="SignaLink" id="Q4VC12"/>
<dbReference type="BioGRID-ORCS" id="118490">
    <property type="hits" value="12 hits in 1155 CRISPR screens"/>
</dbReference>
<dbReference type="ChiTaRS" id="MSS51">
    <property type="organism name" value="human"/>
</dbReference>
<dbReference type="GenomeRNAi" id="118490"/>
<dbReference type="Pharos" id="Q4VC12">
    <property type="development level" value="Tbio"/>
</dbReference>
<dbReference type="PRO" id="PR:Q4VC12"/>
<dbReference type="Proteomes" id="UP000005640">
    <property type="component" value="Chromosome 10"/>
</dbReference>
<dbReference type="RNAct" id="Q4VC12">
    <property type="molecule type" value="protein"/>
</dbReference>
<dbReference type="Bgee" id="ENSG00000166343">
    <property type="expression patterns" value="Expressed in vastus lateralis and 108 other cell types or tissues"/>
</dbReference>
<dbReference type="ExpressionAtlas" id="Q4VC12">
    <property type="expression patterns" value="baseline and differential"/>
</dbReference>
<dbReference type="GO" id="GO:0008270">
    <property type="term" value="F:zinc ion binding"/>
    <property type="evidence" value="ECO:0007669"/>
    <property type="project" value="UniProtKB-KW"/>
</dbReference>
<dbReference type="FunFam" id="6.10.140.2220:FF:000029">
    <property type="entry name" value="HIF prolyl hydroxylase, isoform C"/>
    <property type="match status" value="1"/>
</dbReference>
<dbReference type="Gene3D" id="6.10.140.2220">
    <property type="match status" value="1"/>
</dbReference>
<dbReference type="InterPro" id="IPR052839">
    <property type="entry name" value="Mito_gene_expr_regulator"/>
</dbReference>
<dbReference type="InterPro" id="IPR046824">
    <property type="entry name" value="Mss51-like_C"/>
</dbReference>
<dbReference type="InterPro" id="IPR002893">
    <property type="entry name" value="Znf_MYND"/>
</dbReference>
<dbReference type="PANTHER" id="PTHR46920">
    <property type="match status" value="1"/>
</dbReference>
<dbReference type="PANTHER" id="PTHR46920:SF1">
    <property type="entry name" value="PROTEIN MSS51 HOMOLOG, MITOCHONDRIAL-RELATED"/>
    <property type="match status" value="1"/>
</dbReference>
<dbReference type="Pfam" id="PF20179">
    <property type="entry name" value="MSS51_C"/>
    <property type="match status" value="1"/>
</dbReference>
<dbReference type="Pfam" id="PF01753">
    <property type="entry name" value="zf-MYND"/>
    <property type="match status" value="1"/>
</dbReference>
<dbReference type="SUPFAM" id="SSF144232">
    <property type="entry name" value="HIT/MYND zinc finger-like"/>
    <property type="match status" value="1"/>
</dbReference>
<dbReference type="PROSITE" id="PS01360">
    <property type="entry name" value="ZF_MYND_1"/>
    <property type="match status" value="1"/>
</dbReference>
<dbReference type="PROSITE" id="PS50865">
    <property type="entry name" value="ZF_MYND_2"/>
    <property type="match status" value="1"/>
</dbReference>
<gene>
    <name type="primary">MSS51</name>
    <name type="synonym">ZMYND17</name>
</gene>
<reference key="1">
    <citation type="journal article" date="2004" name="Nat. Genet.">
        <title>Complete sequencing and characterization of 21,243 full-length human cDNAs.</title>
        <authorList>
            <person name="Ota T."/>
            <person name="Suzuki Y."/>
            <person name="Nishikawa T."/>
            <person name="Otsuki T."/>
            <person name="Sugiyama T."/>
            <person name="Irie R."/>
            <person name="Wakamatsu A."/>
            <person name="Hayashi K."/>
            <person name="Sato H."/>
            <person name="Nagai K."/>
            <person name="Kimura K."/>
            <person name="Makita H."/>
            <person name="Sekine M."/>
            <person name="Obayashi M."/>
            <person name="Nishi T."/>
            <person name="Shibahara T."/>
            <person name="Tanaka T."/>
            <person name="Ishii S."/>
            <person name="Yamamoto J."/>
            <person name="Saito K."/>
            <person name="Kawai Y."/>
            <person name="Isono Y."/>
            <person name="Nakamura Y."/>
            <person name="Nagahari K."/>
            <person name="Murakami K."/>
            <person name="Yasuda T."/>
            <person name="Iwayanagi T."/>
            <person name="Wagatsuma M."/>
            <person name="Shiratori A."/>
            <person name="Sudo H."/>
            <person name="Hosoiri T."/>
            <person name="Kaku Y."/>
            <person name="Kodaira H."/>
            <person name="Kondo H."/>
            <person name="Sugawara M."/>
            <person name="Takahashi M."/>
            <person name="Kanda K."/>
            <person name="Yokoi T."/>
            <person name="Furuya T."/>
            <person name="Kikkawa E."/>
            <person name="Omura Y."/>
            <person name="Abe K."/>
            <person name="Kamihara K."/>
            <person name="Katsuta N."/>
            <person name="Sato K."/>
            <person name="Tanikawa M."/>
            <person name="Yamazaki M."/>
            <person name="Ninomiya K."/>
            <person name="Ishibashi T."/>
            <person name="Yamashita H."/>
            <person name="Murakawa K."/>
            <person name="Fujimori K."/>
            <person name="Tanai H."/>
            <person name="Kimata M."/>
            <person name="Watanabe M."/>
            <person name="Hiraoka S."/>
            <person name="Chiba Y."/>
            <person name="Ishida S."/>
            <person name="Ono Y."/>
            <person name="Takiguchi S."/>
            <person name="Watanabe S."/>
            <person name="Yosida M."/>
            <person name="Hotuta T."/>
            <person name="Kusano J."/>
            <person name="Kanehori K."/>
            <person name="Takahashi-Fujii A."/>
            <person name="Hara H."/>
            <person name="Tanase T.-O."/>
            <person name="Nomura Y."/>
            <person name="Togiya S."/>
            <person name="Komai F."/>
            <person name="Hara R."/>
            <person name="Takeuchi K."/>
            <person name="Arita M."/>
            <person name="Imose N."/>
            <person name="Musashino K."/>
            <person name="Yuuki H."/>
            <person name="Oshima A."/>
            <person name="Sasaki N."/>
            <person name="Aotsuka S."/>
            <person name="Yoshikawa Y."/>
            <person name="Matsunawa H."/>
            <person name="Ichihara T."/>
            <person name="Shiohata N."/>
            <person name="Sano S."/>
            <person name="Moriya S."/>
            <person name="Momiyama H."/>
            <person name="Satoh N."/>
            <person name="Takami S."/>
            <person name="Terashima Y."/>
            <person name="Suzuki O."/>
            <person name="Nakagawa S."/>
            <person name="Senoh A."/>
            <person name="Mizoguchi H."/>
            <person name="Goto Y."/>
            <person name="Shimizu F."/>
            <person name="Wakebe H."/>
            <person name="Hishigaki H."/>
            <person name="Watanabe T."/>
            <person name="Sugiyama A."/>
            <person name="Takemoto M."/>
            <person name="Kawakami B."/>
            <person name="Yamazaki M."/>
            <person name="Watanabe K."/>
            <person name="Kumagai A."/>
            <person name="Itakura S."/>
            <person name="Fukuzumi Y."/>
            <person name="Fujimori Y."/>
            <person name="Komiyama M."/>
            <person name="Tashiro H."/>
            <person name="Tanigami A."/>
            <person name="Fujiwara T."/>
            <person name="Ono T."/>
            <person name="Yamada K."/>
            <person name="Fujii Y."/>
            <person name="Ozaki K."/>
            <person name="Hirao M."/>
            <person name="Ohmori Y."/>
            <person name="Kawabata A."/>
            <person name="Hikiji T."/>
            <person name="Kobatake N."/>
            <person name="Inagaki H."/>
            <person name="Ikema Y."/>
            <person name="Okamoto S."/>
            <person name="Okitani R."/>
            <person name="Kawakami T."/>
            <person name="Noguchi S."/>
            <person name="Itoh T."/>
            <person name="Shigeta K."/>
            <person name="Senba T."/>
            <person name="Matsumura K."/>
            <person name="Nakajima Y."/>
            <person name="Mizuno T."/>
            <person name="Morinaga M."/>
            <person name="Sasaki M."/>
            <person name="Togashi T."/>
            <person name="Oyama M."/>
            <person name="Hata H."/>
            <person name="Watanabe M."/>
            <person name="Komatsu T."/>
            <person name="Mizushima-Sugano J."/>
            <person name="Satoh T."/>
            <person name="Shirai Y."/>
            <person name="Takahashi Y."/>
            <person name="Nakagawa K."/>
            <person name="Okumura K."/>
            <person name="Nagase T."/>
            <person name="Nomura N."/>
            <person name="Kikuchi H."/>
            <person name="Masuho Y."/>
            <person name="Yamashita R."/>
            <person name="Nakai K."/>
            <person name="Yada T."/>
            <person name="Nakamura Y."/>
            <person name="Ohara O."/>
            <person name="Isogai T."/>
            <person name="Sugano S."/>
        </authorList>
    </citation>
    <scope>NUCLEOTIDE SEQUENCE [LARGE SCALE MRNA] (ISOFORM 2)</scope>
    <source>
        <tissue>Skeletal muscle</tissue>
    </source>
</reference>
<reference key="2">
    <citation type="journal article" date="2007" name="BMC Genomics">
        <title>The full-ORF clone resource of the German cDNA consortium.</title>
        <authorList>
            <person name="Bechtel S."/>
            <person name="Rosenfelder H."/>
            <person name="Duda A."/>
            <person name="Schmidt C.P."/>
            <person name="Ernst U."/>
            <person name="Wellenreuther R."/>
            <person name="Mehrle A."/>
            <person name="Schuster C."/>
            <person name="Bahr A."/>
            <person name="Bloecker H."/>
            <person name="Heubner D."/>
            <person name="Hoerlein A."/>
            <person name="Michel G."/>
            <person name="Wedler H."/>
            <person name="Koehrer K."/>
            <person name="Ottenwaelder B."/>
            <person name="Poustka A."/>
            <person name="Wiemann S."/>
            <person name="Schupp I."/>
        </authorList>
    </citation>
    <scope>NUCLEOTIDE SEQUENCE [LARGE SCALE MRNA] (ISOFORM 3)</scope>
    <source>
        <tissue>Fetal brain</tissue>
    </source>
</reference>
<reference key="3">
    <citation type="journal article" date="2004" name="Nature">
        <title>The DNA sequence and comparative analysis of human chromosome 10.</title>
        <authorList>
            <person name="Deloukas P."/>
            <person name="Earthrowl M.E."/>
            <person name="Grafham D.V."/>
            <person name="Rubenfield M."/>
            <person name="French L."/>
            <person name="Steward C.A."/>
            <person name="Sims S.K."/>
            <person name="Jones M.C."/>
            <person name="Searle S."/>
            <person name="Scott C."/>
            <person name="Howe K."/>
            <person name="Hunt S.E."/>
            <person name="Andrews T.D."/>
            <person name="Gilbert J.G.R."/>
            <person name="Swarbreck D."/>
            <person name="Ashurst J.L."/>
            <person name="Taylor A."/>
            <person name="Battles J."/>
            <person name="Bird C.P."/>
            <person name="Ainscough R."/>
            <person name="Almeida J.P."/>
            <person name="Ashwell R.I.S."/>
            <person name="Ambrose K.D."/>
            <person name="Babbage A.K."/>
            <person name="Bagguley C.L."/>
            <person name="Bailey J."/>
            <person name="Banerjee R."/>
            <person name="Bates K."/>
            <person name="Beasley H."/>
            <person name="Bray-Allen S."/>
            <person name="Brown A.J."/>
            <person name="Brown J.Y."/>
            <person name="Burford D.C."/>
            <person name="Burrill W."/>
            <person name="Burton J."/>
            <person name="Cahill P."/>
            <person name="Camire D."/>
            <person name="Carter N.P."/>
            <person name="Chapman J.C."/>
            <person name="Clark S.Y."/>
            <person name="Clarke G."/>
            <person name="Clee C.M."/>
            <person name="Clegg S."/>
            <person name="Corby N."/>
            <person name="Coulson A."/>
            <person name="Dhami P."/>
            <person name="Dutta I."/>
            <person name="Dunn M."/>
            <person name="Faulkner L."/>
            <person name="Frankish A."/>
            <person name="Frankland J.A."/>
            <person name="Garner P."/>
            <person name="Garnett J."/>
            <person name="Gribble S."/>
            <person name="Griffiths C."/>
            <person name="Grocock R."/>
            <person name="Gustafson E."/>
            <person name="Hammond S."/>
            <person name="Harley J.L."/>
            <person name="Hart E."/>
            <person name="Heath P.D."/>
            <person name="Ho T.P."/>
            <person name="Hopkins B."/>
            <person name="Horne J."/>
            <person name="Howden P.J."/>
            <person name="Huckle E."/>
            <person name="Hynds C."/>
            <person name="Johnson C."/>
            <person name="Johnson D."/>
            <person name="Kana A."/>
            <person name="Kay M."/>
            <person name="Kimberley A.M."/>
            <person name="Kershaw J.K."/>
            <person name="Kokkinaki M."/>
            <person name="Laird G.K."/>
            <person name="Lawlor S."/>
            <person name="Lee H.M."/>
            <person name="Leongamornlert D.A."/>
            <person name="Laird G."/>
            <person name="Lloyd C."/>
            <person name="Lloyd D.M."/>
            <person name="Loveland J."/>
            <person name="Lovell J."/>
            <person name="McLaren S."/>
            <person name="McLay K.E."/>
            <person name="McMurray A."/>
            <person name="Mashreghi-Mohammadi M."/>
            <person name="Matthews L."/>
            <person name="Milne S."/>
            <person name="Nickerson T."/>
            <person name="Nguyen M."/>
            <person name="Overton-Larty E."/>
            <person name="Palmer S.A."/>
            <person name="Pearce A.V."/>
            <person name="Peck A.I."/>
            <person name="Pelan S."/>
            <person name="Phillimore B."/>
            <person name="Porter K."/>
            <person name="Rice C.M."/>
            <person name="Rogosin A."/>
            <person name="Ross M.T."/>
            <person name="Sarafidou T."/>
            <person name="Sehra H.K."/>
            <person name="Shownkeen R."/>
            <person name="Skuce C.D."/>
            <person name="Smith M."/>
            <person name="Standring L."/>
            <person name="Sycamore N."/>
            <person name="Tester J."/>
            <person name="Thorpe A."/>
            <person name="Torcasso W."/>
            <person name="Tracey A."/>
            <person name="Tromans A."/>
            <person name="Tsolas J."/>
            <person name="Wall M."/>
            <person name="Walsh J."/>
            <person name="Wang H."/>
            <person name="Weinstock K."/>
            <person name="West A.P."/>
            <person name="Willey D.L."/>
            <person name="Whitehead S.L."/>
            <person name="Wilming L."/>
            <person name="Wray P.W."/>
            <person name="Young L."/>
            <person name="Chen Y."/>
            <person name="Lovering R.C."/>
            <person name="Moschonas N.K."/>
            <person name="Siebert R."/>
            <person name="Fechtel K."/>
            <person name="Bentley D."/>
            <person name="Durbin R.M."/>
            <person name="Hubbard T."/>
            <person name="Doucette-Stamm L."/>
            <person name="Beck S."/>
            <person name="Smith D.R."/>
            <person name="Rogers J."/>
        </authorList>
    </citation>
    <scope>NUCLEOTIDE SEQUENCE [LARGE SCALE GENOMIC DNA]</scope>
</reference>
<reference key="4">
    <citation type="journal article" date="2004" name="Genome Res.">
        <title>The status, quality, and expansion of the NIH full-length cDNA project: the Mammalian Gene Collection (MGC).</title>
        <authorList>
            <consortium name="The MGC Project Team"/>
        </authorList>
    </citation>
    <scope>NUCLEOTIDE SEQUENCE [LARGE SCALE MRNA] (ISOFORM 1)</scope>
    <source>
        <tissue>Muscle</tissue>
    </source>
</reference>
<reference key="5">
    <citation type="journal article" date="2012" name="Proc. Natl. Acad. Sci. U.S.A.">
        <title>N-terminal acetylome analyses and functional insights of the N-terminal acetyltransferase NatB.</title>
        <authorList>
            <person name="Van Damme P."/>
            <person name="Lasa M."/>
            <person name="Polevoda B."/>
            <person name="Gazquez C."/>
            <person name="Elosegui-Artola A."/>
            <person name="Kim D.S."/>
            <person name="De Juan-Pardo E."/>
            <person name="Demeyer K."/>
            <person name="Hole K."/>
            <person name="Larrea E."/>
            <person name="Timmerman E."/>
            <person name="Prieto J."/>
            <person name="Arnesen T."/>
            <person name="Sherman F."/>
            <person name="Gevaert K."/>
            <person name="Aldabe R."/>
        </authorList>
    </citation>
    <scope>IDENTIFICATION BY MASS SPECTROMETRY [LARGE SCALE ANALYSIS]</scope>
</reference>
<proteinExistence type="evidence at protein level"/>
<protein>
    <recommendedName>
        <fullName>Putative protein MSS51 homolog, mitochondrial</fullName>
    </recommendedName>
    <alternativeName>
        <fullName>Zinc finger MYND domain-containing protein 17</fullName>
    </alternativeName>
</protein>
<evidence type="ECO:0000255" key="1">
    <source>
        <dbReference type="PROSITE-ProRule" id="PRU00134"/>
    </source>
</evidence>
<evidence type="ECO:0000303" key="2">
    <source>
    </source>
</evidence>
<evidence type="ECO:0000303" key="3">
    <source>
    </source>
</evidence>
<evidence type="ECO:0000305" key="4"/>
<organism>
    <name type="scientific">Homo sapiens</name>
    <name type="common">Human</name>
    <dbReference type="NCBI Taxonomy" id="9606"/>
    <lineage>
        <taxon>Eukaryota</taxon>
        <taxon>Metazoa</taxon>
        <taxon>Chordata</taxon>
        <taxon>Craniata</taxon>
        <taxon>Vertebrata</taxon>
        <taxon>Euteleostomi</taxon>
        <taxon>Mammalia</taxon>
        <taxon>Eutheria</taxon>
        <taxon>Euarchontoglires</taxon>
        <taxon>Primates</taxon>
        <taxon>Haplorrhini</taxon>
        <taxon>Catarrhini</taxon>
        <taxon>Hominidae</taxon>
        <taxon>Homo</taxon>
    </lineage>
</organism>
<name>MSS51_HUMAN</name>